<reference key="1">
    <citation type="journal article" date="1999" name="Biosci. Biotechnol. Biochem.">
        <title>Sequence analysis of a 32-kb region including the major ribosomal protein gene clusters from alkaliphilic Bacillus sp. strain C-125.</title>
        <authorList>
            <person name="Takami H."/>
            <person name="Takaki Y."/>
            <person name="Nakasone K."/>
            <person name="Hirama C."/>
            <person name="Inoue A."/>
            <person name="Horikoshi K."/>
        </authorList>
    </citation>
    <scope>NUCLEOTIDE SEQUENCE [GENOMIC DNA]</scope>
    <source>
        <strain>ATCC BAA-125 / DSM 18197 / FERM 7344 / JCM 9153 / C-125</strain>
    </source>
</reference>
<reference key="2">
    <citation type="journal article" date="2000" name="Nucleic Acids Res.">
        <title>Complete genome sequence of the alkaliphilic bacterium Bacillus halodurans and genomic sequence comparison with Bacillus subtilis.</title>
        <authorList>
            <person name="Takami H."/>
            <person name="Nakasone K."/>
            <person name="Takaki Y."/>
            <person name="Maeno G."/>
            <person name="Sasaki R."/>
            <person name="Masui N."/>
            <person name="Fuji F."/>
            <person name="Hirama C."/>
            <person name="Nakamura Y."/>
            <person name="Ogasawara N."/>
            <person name="Kuhara S."/>
            <person name="Horikoshi K."/>
        </authorList>
    </citation>
    <scope>NUCLEOTIDE SEQUENCE [LARGE SCALE GENOMIC DNA]</scope>
    <source>
        <strain>ATCC BAA-125 / DSM 18197 / FERM 7344 / JCM 9153 / C-125</strain>
    </source>
</reference>
<evidence type="ECO:0000255" key="1">
    <source>
        <dbReference type="HAMAP-Rule" id="MF_00574"/>
    </source>
</evidence>
<evidence type="ECO:0000303" key="2">
    <source>
    </source>
</evidence>
<evidence type="ECO:0000305" key="3"/>
<proteinExistence type="inferred from homology"/>
<dbReference type="EMBL" id="AB017508">
    <property type="protein sequence ID" value="BAA75265.1"/>
    <property type="molecule type" value="Genomic_DNA"/>
</dbReference>
<dbReference type="EMBL" id="BA000004">
    <property type="protein sequence ID" value="BAB03847.1"/>
    <property type="molecule type" value="Genomic_DNA"/>
</dbReference>
<dbReference type="PIR" id="T44377">
    <property type="entry name" value="T44377"/>
</dbReference>
<dbReference type="RefSeq" id="WP_010896311.1">
    <property type="nucleotide sequence ID" value="NC_002570.2"/>
</dbReference>
<dbReference type="SMR" id="Q9Z9M0"/>
<dbReference type="STRING" id="272558.gene:10725968"/>
<dbReference type="GeneID" id="87595669"/>
<dbReference type="KEGG" id="bha:BH0128"/>
<dbReference type="eggNOG" id="COG1358">
    <property type="taxonomic scope" value="Bacteria"/>
</dbReference>
<dbReference type="HOGENOM" id="CLU_168063_2_0_9"/>
<dbReference type="OrthoDB" id="2353623at2"/>
<dbReference type="Proteomes" id="UP000001258">
    <property type="component" value="Chromosome"/>
</dbReference>
<dbReference type="GO" id="GO:0003723">
    <property type="term" value="F:RNA binding"/>
    <property type="evidence" value="ECO:0007669"/>
    <property type="project" value="UniProtKB-UniRule"/>
</dbReference>
<dbReference type="Gene3D" id="3.30.1330.30">
    <property type="match status" value="1"/>
</dbReference>
<dbReference type="HAMAP" id="MF_00574">
    <property type="entry name" value="Ribosomal_eL8_Bact"/>
    <property type="match status" value="1"/>
</dbReference>
<dbReference type="InterPro" id="IPR029064">
    <property type="entry name" value="Ribosomal_eL30-like_sf"/>
</dbReference>
<dbReference type="InterPro" id="IPR004038">
    <property type="entry name" value="Ribosomal_eL8/eL30/eS12/Gad45"/>
</dbReference>
<dbReference type="InterPro" id="IPR023460">
    <property type="entry name" value="RNA_bf_YbxF-like"/>
</dbReference>
<dbReference type="NCBIfam" id="NF010125">
    <property type="entry name" value="PRK13602.1"/>
    <property type="match status" value="1"/>
</dbReference>
<dbReference type="Pfam" id="PF01248">
    <property type="entry name" value="Ribosomal_L7Ae"/>
    <property type="match status" value="1"/>
</dbReference>
<dbReference type="PRINTS" id="PR00884">
    <property type="entry name" value="RIBOSOMALHS6"/>
</dbReference>
<dbReference type="SUPFAM" id="SSF55315">
    <property type="entry name" value="L30e-like"/>
    <property type="match status" value="1"/>
</dbReference>
<sequence>MSYEKVSQATDLVIGTKQTLKALEQEEVLEVVIAKDAEPRVVNKVEAMASVKQIPIIYVDSMKKLGKACGIDVGAATVALKK</sequence>
<gene>
    <name evidence="2" type="primary">ybxF</name>
    <name type="ordered locus">BH0128</name>
</gene>
<feature type="chain" id="PRO_0000136810" description="RNA-binding protein BH0128">
    <location>
        <begin position="1"/>
        <end position="82"/>
    </location>
</feature>
<keyword id="KW-1185">Reference proteome</keyword>
<keyword id="KW-0694">RNA-binding</keyword>
<name>RXL7_HALH5</name>
<organism>
    <name type="scientific">Halalkalibacterium halodurans (strain ATCC BAA-125 / DSM 18197 / FERM 7344 / JCM 9153 / C-125)</name>
    <name type="common">Bacillus halodurans</name>
    <dbReference type="NCBI Taxonomy" id="272558"/>
    <lineage>
        <taxon>Bacteria</taxon>
        <taxon>Bacillati</taxon>
        <taxon>Bacillota</taxon>
        <taxon>Bacilli</taxon>
        <taxon>Bacillales</taxon>
        <taxon>Bacillaceae</taxon>
        <taxon>Halalkalibacterium (ex Joshi et al. 2022)</taxon>
    </lineage>
</organism>
<accession>Q9Z9M0</accession>
<comment type="similarity">
    <text evidence="1">Belongs to the eukaryotic ribosomal protein eL8 family.</text>
</comment>
<protein>
    <recommendedName>
        <fullName evidence="1">RNA-binding protein BH0128</fullName>
    </recommendedName>
    <alternativeName>
        <fullName evidence="3">Putative ribosomal protein L7Ae-like</fullName>
    </alternativeName>
    <alternativeName>
        <fullName evidence="1">Ribosomal protein eL8-like</fullName>
    </alternativeName>
</protein>